<accession>A4GGA1</accession>
<accession>A8W816</accession>
<gene>
    <name evidence="1" type="primary">psbC</name>
</gene>
<evidence type="ECO:0000255" key="1">
    <source>
        <dbReference type="HAMAP-Rule" id="MF_01496"/>
    </source>
</evidence>
<evidence type="ECO:0000305" key="2"/>
<feature type="propeptide" id="PRO_0000431192" evidence="1">
    <location>
        <begin position="1"/>
        <end position="14"/>
    </location>
</feature>
<feature type="chain" id="PRO_0000361468" description="Photosystem II CP43 reaction center protein" evidence="1">
    <location>
        <begin position="15"/>
        <end position="473"/>
    </location>
</feature>
<feature type="transmembrane region" description="Helical" evidence="1">
    <location>
        <begin position="69"/>
        <end position="93"/>
    </location>
</feature>
<feature type="transmembrane region" description="Helical" evidence="1">
    <location>
        <begin position="134"/>
        <end position="155"/>
    </location>
</feature>
<feature type="transmembrane region" description="Helical" evidence="1">
    <location>
        <begin position="178"/>
        <end position="200"/>
    </location>
</feature>
<feature type="transmembrane region" description="Helical" evidence="1">
    <location>
        <begin position="255"/>
        <end position="275"/>
    </location>
</feature>
<feature type="transmembrane region" description="Helical" evidence="1">
    <location>
        <begin position="291"/>
        <end position="312"/>
    </location>
</feature>
<feature type="transmembrane region" description="Helical" evidence="1">
    <location>
        <begin position="447"/>
        <end position="471"/>
    </location>
</feature>
<feature type="binding site" evidence="1">
    <location>
        <position position="367"/>
    </location>
    <ligand>
        <name>[CaMn4O5] cluster</name>
        <dbReference type="ChEBI" id="CHEBI:189552"/>
    </ligand>
</feature>
<feature type="modified residue" description="N-acetylthreonine" evidence="1">
    <location>
        <position position="15"/>
    </location>
</feature>
<feature type="modified residue" description="Phosphothreonine" evidence="1">
    <location>
        <position position="15"/>
    </location>
</feature>
<dbReference type="EMBL" id="DQ886273">
    <property type="protein sequence ID" value="ABH88082.1"/>
    <property type="molecule type" value="Genomic_DNA"/>
</dbReference>
<dbReference type="EMBL" id="EU196765">
    <property type="protein sequence ID" value="ABW22786.1"/>
    <property type="status" value="ALT_INIT"/>
    <property type="molecule type" value="Genomic_DNA"/>
</dbReference>
<dbReference type="RefSeq" id="YP_001122802.1">
    <property type="nucleotide sequence ID" value="NC_009259.1"/>
</dbReference>
<dbReference type="SMR" id="A4GGA1"/>
<dbReference type="GeneID" id="4961798"/>
<dbReference type="KEGG" id="pvu:4961798"/>
<dbReference type="eggNOG" id="ENOG502QR3X">
    <property type="taxonomic scope" value="Eukaryota"/>
</dbReference>
<dbReference type="GO" id="GO:0009535">
    <property type="term" value="C:chloroplast thylakoid membrane"/>
    <property type="evidence" value="ECO:0007669"/>
    <property type="project" value="UniProtKB-SubCell"/>
</dbReference>
<dbReference type="GO" id="GO:0009523">
    <property type="term" value="C:photosystem II"/>
    <property type="evidence" value="ECO:0007669"/>
    <property type="project" value="UniProtKB-KW"/>
</dbReference>
<dbReference type="GO" id="GO:0016168">
    <property type="term" value="F:chlorophyll binding"/>
    <property type="evidence" value="ECO:0007669"/>
    <property type="project" value="UniProtKB-UniRule"/>
</dbReference>
<dbReference type="GO" id="GO:0045156">
    <property type="term" value="F:electron transporter, transferring electrons within the cyclic electron transport pathway of photosynthesis activity"/>
    <property type="evidence" value="ECO:0007669"/>
    <property type="project" value="InterPro"/>
</dbReference>
<dbReference type="GO" id="GO:0046872">
    <property type="term" value="F:metal ion binding"/>
    <property type="evidence" value="ECO:0007669"/>
    <property type="project" value="UniProtKB-KW"/>
</dbReference>
<dbReference type="GO" id="GO:0009772">
    <property type="term" value="P:photosynthetic electron transport in photosystem II"/>
    <property type="evidence" value="ECO:0007669"/>
    <property type="project" value="InterPro"/>
</dbReference>
<dbReference type="FunFam" id="1.10.10.670:FF:000001">
    <property type="entry name" value="Photosystem II CP43 reaction center protein"/>
    <property type="match status" value="1"/>
</dbReference>
<dbReference type="Gene3D" id="1.10.10.670">
    <property type="entry name" value="photosystem ii from thermosynechococcus elongatus"/>
    <property type="match status" value="1"/>
</dbReference>
<dbReference type="HAMAP" id="MF_01496">
    <property type="entry name" value="PSII_PsbC_CP43"/>
    <property type="match status" value="1"/>
</dbReference>
<dbReference type="InterPro" id="IPR000932">
    <property type="entry name" value="PS_antenna-like"/>
</dbReference>
<dbReference type="InterPro" id="IPR036001">
    <property type="entry name" value="PS_II_antenna-like_sf"/>
</dbReference>
<dbReference type="InterPro" id="IPR005869">
    <property type="entry name" value="PSII_PsbC"/>
</dbReference>
<dbReference type="InterPro" id="IPR044900">
    <property type="entry name" value="PSII_PsbC_sf"/>
</dbReference>
<dbReference type="NCBIfam" id="TIGR01153">
    <property type="entry name" value="psbC"/>
    <property type="match status" value="1"/>
</dbReference>
<dbReference type="Pfam" id="PF00421">
    <property type="entry name" value="PSII"/>
    <property type="match status" value="1"/>
</dbReference>
<dbReference type="SUPFAM" id="SSF161077">
    <property type="entry name" value="Photosystem II antenna protein-like"/>
    <property type="match status" value="1"/>
</dbReference>
<reference key="1">
    <citation type="journal article" date="2007" name="BMC Genomics">
        <title>Rapid evolutionary change of common bean (Phaseolus vulgaris L) plastome, and the genomic diversification of legume chloroplasts.</title>
        <authorList>
            <person name="Guo X."/>
            <person name="Castillo-Ramirez S."/>
            <person name="Gonzalez V."/>
            <person name="Bustos P."/>
            <person name="Fernandez-Vazquez J.L."/>
            <person name="Santamaria R.I."/>
            <person name="Arellano J."/>
            <person name="Cevallos M.A."/>
            <person name="Davila G."/>
        </authorList>
    </citation>
    <scope>NUCLEOTIDE SEQUENCE [LARGE SCALE GENOMIC DNA]</scope>
    <source>
        <strain>cv. Negro Jamapa</strain>
    </source>
</reference>
<reference key="2">
    <citation type="submission" date="2007-10" db="EMBL/GenBank/DDBJ databases">
        <title>Complete nucleotide sequence of the plastid genome of the common bean, Phaseolus vulgaris.</title>
        <authorList>
            <person name="Moore M.J."/>
            <person name="Triplett E.W."/>
            <person name="Broughton W.J."/>
            <person name="Soltis P.S."/>
            <person name="Soltis D.E."/>
        </authorList>
    </citation>
    <scope>NUCLEOTIDE SEQUENCE [LARGE SCALE GENOMIC DNA]</scope>
</reference>
<proteinExistence type="inferred from homology"/>
<comment type="function">
    <text evidence="1">One of the components of the core complex of photosystem II (PSII). It binds chlorophyll and helps catalyze the primary light-induced photochemical processes of PSII. PSII is a light-driven water:plastoquinone oxidoreductase, using light energy to abstract electrons from H(2)O, generating O(2) and a proton gradient subsequently used for ATP formation.</text>
</comment>
<comment type="cofactor">
    <text evidence="1">Binds multiple chlorophylls and provides some of the ligands for the Ca-4Mn-5O cluster of the oxygen-evolving complex. It may also provide a ligand for a Cl- that is required for oxygen evolution. PSII binds additional chlorophylls, carotenoids and specific lipids.</text>
</comment>
<comment type="subunit">
    <text evidence="1">PSII is composed of 1 copy each of membrane proteins PsbA, PsbB, PsbC, PsbD, PsbE, PsbF, PsbH, PsbI, PsbJ, PsbK, PsbL, PsbM, PsbT, PsbX, PsbY, PsbZ, Psb30/Ycf12, at least 3 peripheral proteins of the oxygen-evolving complex and a large number of cofactors. It forms dimeric complexes.</text>
</comment>
<comment type="subcellular location">
    <subcellularLocation>
        <location evidence="1">Plastid</location>
        <location evidence="1">Chloroplast thylakoid membrane</location>
        <topology evidence="1">Multi-pass membrane protein</topology>
    </subcellularLocation>
</comment>
<comment type="similarity">
    <text evidence="1">Belongs to the PsbB/PsbC family. PsbC subfamily.</text>
</comment>
<comment type="sequence caution" evidence="2">
    <conflict type="erroneous initiation">
        <sequence resource="EMBL-CDS" id="ABW22786"/>
    </conflict>
    <text>Truncated N-terminus.</text>
</comment>
<geneLocation type="chloroplast"/>
<protein>
    <recommendedName>
        <fullName evidence="1">Photosystem II CP43 reaction center protein</fullName>
    </recommendedName>
    <alternativeName>
        <fullName evidence="1">PSII 43 kDa protein</fullName>
    </alternativeName>
    <alternativeName>
        <fullName evidence="1">Protein CP-43</fullName>
    </alternativeName>
</protein>
<organism>
    <name type="scientific">Phaseolus vulgaris</name>
    <name type="common">Kidney bean</name>
    <name type="synonym">French bean</name>
    <dbReference type="NCBI Taxonomy" id="3885"/>
    <lineage>
        <taxon>Eukaryota</taxon>
        <taxon>Viridiplantae</taxon>
        <taxon>Streptophyta</taxon>
        <taxon>Embryophyta</taxon>
        <taxon>Tracheophyta</taxon>
        <taxon>Spermatophyta</taxon>
        <taxon>Magnoliopsida</taxon>
        <taxon>eudicotyledons</taxon>
        <taxon>Gunneridae</taxon>
        <taxon>Pentapetalae</taxon>
        <taxon>rosids</taxon>
        <taxon>fabids</taxon>
        <taxon>Fabales</taxon>
        <taxon>Fabaceae</taxon>
        <taxon>Papilionoideae</taxon>
        <taxon>50 kb inversion clade</taxon>
        <taxon>NPAAA clade</taxon>
        <taxon>indigoferoid/millettioid clade</taxon>
        <taxon>Phaseoleae</taxon>
        <taxon>Phaseolus</taxon>
    </lineage>
</organism>
<keyword id="KW-0007">Acetylation</keyword>
<keyword id="KW-0148">Chlorophyll</keyword>
<keyword id="KW-0150">Chloroplast</keyword>
<keyword id="KW-0157">Chromophore</keyword>
<keyword id="KW-0464">Manganese</keyword>
<keyword id="KW-0472">Membrane</keyword>
<keyword id="KW-0479">Metal-binding</keyword>
<keyword id="KW-0597">Phosphoprotein</keyword>
<keyword id="KW-0602">Photosynthesis</keyword>
<keyword id="KW-0604">Photosystem II</keyword>
<keyword id="KW-0934">Plastid</keyword>
<keyword id="KW-0793">Thylakoid</keyword>
<keyword id="KW-0812">Transmembrane</keyword>
<keyword id="KW-1133">Transmembrane helix</keyword>
<name>PSBC_PHAVU</name>
<sequence length="473" mass="51920">MKTLYSLRRFYHVETLFNGTLALTGRDQETTGFAWWAGNARLINLSGKLLGAHVAHAGLIVFWAGAMNLFEVAHFVPEKPMYEQGLILLPHLATLGWGVGPGGEVIDTFPYFVSGVLHLISSAVLGFGGIYHALLGPETLEESFPFFGYVWKDRNKMTTILGIHLILLGIGAFLLVFKALYFGGIYDTWAPGGGDVRKITNLTLSPSILFGYLLKSPFGGEGWIVSVDDLEDIIGGHVWLGSICILGGIWHILTKPFAWARRALVWSGEAYLSYSLGALSVFGFIACCFVWFNNTAYPSEFYGPTGPEASQAQAFTFLVRDQRLGANVGSAQGPTGLGKYLMRSPTGEVIFGGETMRFWDLRAPWLEPLRGPNGLDLSRLKKDIQPWQERRSAEYMTHAPLGSLNSVGGVATEINAVNYVSPRSWLATSHFVLGFFLFVGHLWHAGRARAAAAGFEKGIDRDFEPVLSMTPLN</sequence>